<comment type="function">
    <text evidence="5 8">Inward rectifying potassium channel that probably participates in controlling the resting membrane potential in electrically excitable cells (By similarity). It probably participates in establishing action potential waveform and excitability of neuronal and muscle tissues (By similarity). Inward rectifier potassium channels are characterized by a greater tendency to allow potassium to flow into the cell rather than out of it. Their voltage dependence is regulated by the concentration of extracellular potassium; as external potassium is raised, the voltage range of the channel opening shifts to more positive voltages. The inward rectification is mainly due to the blockage of outward current by internal magnesium.</text>
</comment>
<comment type="catalytic activity">
    <reaction evidence="8">
        <text>K(+)(in) = K(+)(out)</text>
        <dbReference type="Rhea" id="RHEA:29463"/>
        <dbReference type="ChEBI" id="CHEBI:29103"/>
    </reaction>
</comment>
<comment type="activity regulation">
    <text evidence="2 5 8">Activated by phosphatidylinositol 4,5-biphosphate (PtdIns(4,5)P2) (By similarity). PtdIns(4,5)P2 binding to the cytoplasmic side of the channel triggers a conformation change leading to channel opening (By similarity). Inhibited by Ba(2+) (PubMed:8083233).</text>
</comment>
<comment type="subunit">
    <text evidence="3 5">Homotetramer (By similarity). Forms heteromer with KCNJ4 (By similarity). Can form heteromeric channels with Kir2.6/KCNJ18 (By similarity). Association, via its PDZ-recognition domain, with LIN7A, LIN7B, LIN7C, DLG1, CASK and APBA1 plays a key role in its localization and trafficking.</text>
</comment>
<comment type="subcellular location">
    <subcellularLocation>
        <location evidence="6">Membrane</location>
        <topology evidence="6">Multi-pass membrane protein</topology>
    </subcellularLocation>
    <subcellularLocation>
        <location evidence="5">Cell membrane</location>
    </subcellularLocation>
    <subcellularLocation>
        <location evidence="3">Cell membrane</location>
        <location evidence="3">Sarcolemma</location>
        <location evidence="3">T-tubule</location>
    </subcellularLocation>
</comment>
<comment type="tissue specificity">
    <text evidence="8">Highest level in cerebellum.</text>
</comment>
<comment type="similarity">
    <text evidence="9">Belongs to the inward rectifier-type potassium channel (TC 1.A.2.1) family. KCNJ12 subfamily.</text>
</comment>
<name>KCJ12_MOUSE</name>
<accession>P52187</accession>
<accession>Q8CCR0</accession>
<accession>Q9QYF2</accession>
<sequence length="427" mass="48427">MTAASRANPYSIVSSEEDGLHLVTMSGANGFGNGKVHTRRRCRNRFVKKNGQCNIEFANMDEKSQRYLADMFTTCVDIRWRYMLLIFSLAFLASWLLFGIIFWVIAVAHGDLEPAEGRGRTPCVLQVHGFMAAFLFSIETQTTIGYGLRCVTEECPVAVFMVVAQSIVGCIIDSFMIGAIMAKMARPKKRAQTLLFSHNAVVALRDGKLCLMWRVGNLRKSHIVEAHVRAQLIKPRVTEEGEYIPLDQIDIDVGFDKGLDRIFLVSPITILHEIDEASPLFGISRQDLETDDFEIVVILEGMVEATAMTTQARSSYLANEILWGHRFEPVLFEEKNQYKIDYSHFHKTYEVPSTPRCSAKDLVENKFLLPSANSFCYENELAFLSRDEEDEVATDRDGRSPQPEHDFDRLQASSAALERPYRRESEI</sequence>
<organism>
    <name type="scientific">Mus musculus</name>
    <name type="common">Mouse</name>
    <dbReference type="NCBI Taxonomy" id="10090"/>
    <lineage>
        <taxon>Eukaryota</taxon>
        <taxon>Metazoa</taxon>
        <taxon>Chordata</taxon>
        <taxon>Craniata</taxon>
        <taxon>Vertebrata</taxon>
        <taxon>Euteleostomi</taxon>
        <taxon>Mammalia</taxon>
        <taxon>Eutheria</taxon>
        <taxon>Euarchontoglires</taxon>
        <taxon>Glires</taxon>
        <taxon>Rodentia</taxon>
        <taxon>Myomorpha</taxon>
        <taxon>Muroidea</taxon>
        <taxon>Muridae</taxon>
        <taxon>Murinae</taxon>
        <taxon>Mus</taxon>
        <taxon>Mus</taxon>
    </lineage>
</organism>
<keyword id="KW-1003">Cell membrane</keyword>
<keyword id="KW-1015">Disulfide bond</keyword>
<keyword id="KW-0407">Ion channel</keyword>
<keyword id="KW-0406">Ion transport</keyword>
<keyword id="KW-0472">Membrane</keyword>
<keyword id="KW-0479">Metal-binding</keyword>
<keyword id="KW-0630">Potassium</keyword>
<keyword id="KW-0633">Potassium transport</keyword>
<keyword id="KW-1185">Reference proteome</keyword>
<keyword id="KW-0702">S-nitrosylation</keyword>
<keyword id="KW-0812">Transmembrane</keyword>
<keyword id="KW-1133">Transmembrane helix</keyword>
<keyword id="KW-0813">Transport</keyword>
<keyword id="KW-0851">Voltage-gated channel</keyword>
<dbReference type="EMBL" id="X80417">
    <property type="protein sequence ID" value="CAA56622.1"/>
    <property type="molecule type" value="mRNA"/>
</dbReference>
<dbReference type="EMBL" id="AK032271">
    <property type="protein sequence ID" value="BAC27788.1"/>
    <property type="molecule type" value="mRNA"/>
</dbReference>
<dbReference type="EMBL" id="AL646093">
    <property type="status" value="NOT_ANNOTATED_CDS"/>
    <property type="molecule type" value="Genomic_DNA"/>
</dbReference>
<dbReference type="EMBL" id="BC115970">
    <property type="protein sequence ID" value="AAI15971.1"/>
    <property type="molecule type" value="mRNA"/>
</dbReference>
<dbReference type="EMBL" id="BC116677">
    <property type="protein sequence ID" value="AAI16678.1"/>
    <property type="molecule type" value="mRNA"/>
</dbReference>
<dbReference type="EMBL" id="AB035889">
    <property type="protein sequence ID" value="BAA88471.1"/>
    <property type="molecule type" value="mRNA"/>
</dbReference>
<dbReference type="CCDS" id="CCDS24805.1"/>
<dbReference type="RefSeq" id="NP_001254522.1">
    <property type="nucleotide sequence ID" value="NM_001267593.1"/>
</dbReference>
<dbReference type="RefSeq" id="XP_006532381.1">
    <property type="nucleotide sequence ID" value="XM_006532318.3"/>
</dbReference>
<dbReference type="RefSeq" id="XP_036012242.1">
    <property type="nucleotide sequence ID" value="XM_036156349.1"/>
</dbReference>
<dbReference type="SMR" id="P52187"/>
<dbReference type="FunCoup" id="P52187">
    <property type="interactions" value="257"/>
</dbReference>
<dbReference type="STRING" id="10090.ENSMUSP00000041696"/>
<dbReference type="iPTMnet" id="P52187"/>
<dbReference type="PhosphoSitePlus" id="P52187"/>
<dbReference type="PaxDb" id="10090-ENSMUSP00000086588"/>
<dbReference type="ProteomicsDB" id="263590"/>
<dbReference type="DNASU" id="16515"/>
<dbReference type="Ensembl" id="ENSMUST00000089184.11">
    <property type="protein sequence ID" value="ENSMUSP00000086588.5"/>
    <property type="gene ID" value="ENSMUSG00000042529.15"/>
</dbReference>
<dbReference type="Ensembl" id="ENSMUST00000108717.3">
    <property type="protein sequence ID" value="ENSMUSP00000104357.3"/>
    <property type="gene ID" value="ENSMUSG00000042529.15"/>
</dbReference>
<dbReference type="GeneID" id="16515"/>
<dbReference type="KEGG" id="mmu:16515"/>
<dbReference type="UCSC" id="uc007jgy.3">
    <property type="organism name" value="mouse"/>
</dbReference>
<dbReference type="AGR" id="MGI:108495"/>
<dbReference type="CTD" id="3768"/>
<dbReference type="MGI" id="MGI:108495">
    <property type="gene designation" value="Kcnj12"/>
</dbReference>
<dbReference type="VEuPathDB" id="HostDB:ENSMUSG00000042529"/>
<dbReference type="eggNOG" id="KOG3827">
    <property type="taxonomic scope" value="Eukaryota"/>
</dbReference>
<dbReference type="GeneTree" id="ENSGT01030000234586"/>
<dbReference type="HOGENOM" id="CLU_022738_11_1_1"/>
<dbReference type="InParanoid" id="P52187"/>
<dbReference type="OMA" id="TMHGMNG"/>
<dbReference type="OrthoDB" id="273257at2759"/>
<dbReference type="TreeFam" id="TF313676"/>
<dbReference type="Reactome" id="R-MMU-1296041">
    <property type="pathway name" value="Activation of G protein gated Potassium channels"/>
</dbReference>
<dbReference type="Reactome" id="R-MMU-1296053">
    <property type="pathway name" value="Classical Kir channels"/>
</dbReference>
<dbReference type="Reactome" id="R-MMU-5576886">
    <property type="pathway name" value="Phase 4 - resting membrane potential"/>
</dbReference>
<dbReference type="Reactome" id="R-MMU-997272">
    <property type="pathway name" value="Inhibition of voltage gated Ca2+ channels via Gbeta/gamma subunits"/>
</dbReference>
<dbReference type="BioGRID-ORCS" id="16515">
    <property type="hits" value="3 hits in 78 CRISPR screens"/>
</dbReference>
<dbReference type="ChiTaRS" id="Kcnj12">
    <property type="organism name" value="mouse"/>
</dbReference>
<dbReference type="PRO" id="PR:P52187"/>
<dbReference type="Proteomes" id="UP000000589">
    <property type="component" value="Chromosome 11"/>
</dbReference>
<dbReference type="RNAct" id="P52187">
    <property type="molecule type" value="protein"/>
</dbReference>
<dbReference type="Bgee" id="ENSMUSG00000042529">
    <property type="expression patterns" value="Expressed in hindlimb stylopod muscle and 80 other cell types or tissues"/>
</dbReference>
<dbReference type="ExpressionAtlas" id="P52187">
    <property type="expression patterns" value="baseline and differential"/>
</dbReference>
<dbReference type="GO" id="GO:0016020">
    <property type="term" value="C:membrane"/>
    <property type="evidence" value="ECO:0000250"/>
    <property type="project" value="UniProtKB"/>
</dbReference>
<dbReference type="GO" id="GO:0034702">
    <property type="term" value="C:monoatomic ion channel complex"/>
    <property type="evidence" value="ECO:0007669"/>
    <property type="project" value="UniProtKB-KW"/>
</dbReference>
<dbReference type="GO" id="GO:0030315">
    <property type="term" value="C:T-tubule"/>
    <property type="evidence" value="ECO:0000250"/>
    <property type="project" value="UniProtKB"/>
</dbReference>
<dbReference type="GO" id="GO:0005242">
    <property type="term" value="F:inward rectifier potassium channel activity"/>
    <property type="evidence" value="ECO:0000250"/>
    <property type="project" value="UniProtKB"/>
</dbReference>
<dbReference type="GO" id="GO:0046872">
    <property type="term" value="F:metal ion binding"/>
    <property type="evidence" value="ECO:0007669"/>
    <property type="project" value="UniProtKB-KW"/>
</dbReference>
<dbReference type="GO" id="GO:0006813">
    <property type="term" value="P:potassium ion transport"/>
    <property type="evidence" value="ECO:0000250"/>
    <property type="project" value="UniProtKB"/>
</dbReference>
<dbReference type="GO" id="GO:0051289">
    <property type="term" value="P:protein homotetramerization"/>
    <property type="evidence" value="ECO:0000250"/>
    <property type="project" value="UniProtKB"/>
</dbReference>
<dbReference type="FunFam" id="1.10.287.70:FF:000039">
    <property type="entry name" value="ATP-sensitive inward rectifier potassium channel 12"/>
    <property type="match status" value="1"/>
</dbReference>
<dbReference type="FunFam" id="2.60.40.1400:FF:000001">
    <property type="entry name" value="G protein-activated inward rectifier potassium channel 2"/>
    <property type="match status" value="1"/>
</dbReference>
<dbReference type="Gene3D" id="1.10.287.70">
    <property type="match status" value="1"/>
</dbReference>
<dbReference type="Gene3D" id="2.60.40.1400">
    <property type="entry name" value="G protein-activated inward rectifier potassium channel 1"/>
    <property type="match status" value="1"/>
</dbReference>
<dbReference type="InterPro" id="IPR014756">
    <property type="entry name" value="Ig_E-set"/>
</dbReference>
<dbReference type="InterPro" id="IPR041647">
    <property type="entry name" value="IRK_C"/>
</dbReference>
<dbReference type="InterPro" id="IPR016449">
    <property type="entry name" value="K_chnl_inward-rec_Kir"/>
</dbReference>
<dbReference type="InterPro" id="IPR003272">
    <property type="entry name" value="K_chnl_inward-rec_Kir2.2"/>
</dbReference>
<dbReference type="InterPro" id="IPR013518">
    <property type="entry name" value="K_chnl_inward-rec_Kir_cyto"/>
</dbReference>
<dbReference type="InterPro" id="IPR013673">
    <property type="entry name" value="K_chnl_inward-rec_Kir_N"/>
</dbReference>
<dbReference type="InterPro" id="IPR040445">
    <property type="entry name" value="Kir_TM"/>
</dbReference>
<dbReference type="PANTHER" id="PTHR11767:SF14">
    <property type="entry name" value="ATP-SENSITIVE INWARD RECTIFIER POTASSIUM CHANNEL 12-RELATED"/>
    <property type="match status" value="1"/>
</dbReference>
<dbReference type="PANTHER" id="PTHR11767">
    <property type="entry name" value="INWARD RECTIFIER POTASSIUM CHANNEL"/>
    <property type="match status" value="1"/>
</dbReference>
<dbReference type="Pfam" id="PF01007">
    <property type="entry name" value="IRK"/>
    <property type="match status" value="1"/>
</dbReference>
<dbReference type="Pfam" id="PF17655">
    <property type="entry name" value="IRK_C"/>
    <property type="match status" value="1"/>
</dbReference>
<dbReference type="Pfam" id="PF08466">
    <property type="entry name" value="IRK_N"/>
    <property type="match status" value="1"/>
</dbReference>
<dbReference type="PRINTS" id="PR01325">
    <property type="entry name" value="KIR22CHANNEL"/>
</dbReference>
<dbReference type="PRINTS" id="PR01320">
    <property type="entry name" value="KIRCHANNEL"/>
</dbReference>
<dbReference type="SUPFAM" id="SSF81296">
    <property type="entry name" value="E set domains"/>
    <property type="match status" value="1"/>
</dbReference>
<dbReference type="SUPFAM" id="SSF81324">
    <property type="entry name" value="Voltage-gated potassium channels"/>
    <property type="match status" value="1"/>
</dbReference>
<proteinExistence type="evidence at transcript level"/>
<evidence type="ECO:0000250" key="1"/>
<evidence type="ECO:0000250" key="2">
    <source>
        <dbReference type="UniProtKB" id="F1NHE9"/>
    </source>
</evidence>
<evidence type="ECO:0000250" key="3">
    <source>
        <dbReference type="UniProtKB" id="P52188"/>
    </source>
</evidence>
<evidence type="ECO:0000250" key="4">
    <source>
        <dbReference type="UniProtKB" id="P63252"/>
    </source>
</evidence>
<evidence type="ECO:0000250" key="5">
    <source>
        <dbReference type="UniProtKB" id="Q14500"/>
    </source>
</evidence>
<evidence type="ECO:0000255" key="6"/>
<evidence type="ECO:0000256" key="7">
    <source>
        <dbReference type="SAM" id="MobiDB-lite"/>
    </source>
</evidence>
<evidence type="ECO:0000269" key="8">
    <source>
    </source>
</evidence>
<evidence type="ECO:0000305" key="9"/>
<feature type="chain" id="PRO_0000154963" description="ATP-sensitive inward rectifier potassium channel 12">
    <location>
        <begin position="1"/>
        <end position="427"/>
    </location>
</feature>
<feature type="topological domain" description="Cytoplasmic" evidence="2">
    <location>
        <begin position="1"/>
        <end position="77"/>
    </location>
</feature>
<feature type="transmembrane region" description="Helical; Name=M1" evidence="2">
    <location>
        <begin position="78"/>
        <end position="104"/>
    </location>
</feature>
<feature type="topological domain" description="Extracellular" evidence="2">
    <location>
        <begin position="105"/>
        <end position="129"/>
    </location>
</feature>
<feature type="intramembrane region" description="Helical; Pore-forming; Name=H5" evidence="2">
    <location>
        <begin position="130"/>
        <end position="146"/>
    </location>
</feature>
<feature type="topological domain" description="Extracellular" evidence="2">
    <location>
        <begin position="147"/>
        <end position="155"/>
    </location>
</feature>
<feature type="transmembrane region" description="Helical; Name=M2" evidence="2">
    <location>
        <begin position="156"/>
        <end position="183"/>
    </location>
</feature>
<feature type="topological domain" description="Cytoplasmic" evidence="2">
    <location>
        <begin position="184"/>
        <end position="427"/>
    </location>
</feature>
<feature type="region of interest" description="Disordered" evidence="7">
    <location>
        <begin position="387"/>
        <end position="427"/>
    </location>
</feature>
<feature type="short sequence motif" description="Selectivity filter" evidence="2">
    <location>
        <begin position="143"/>
        <end position="148"/>
    </location>
</feature>
<feature type="short sequence motif" description="PDZ-binding" evidence="6">
    <location>
        <begin position="425"/>
        <end position="427"/>
    </location>
</feature>
<feature type="compositionally biased region" description="Basic and acidic residues" evidence="7">
    <location>
        <begin position="393"/>
        <end position="409"/>
    </location>
</feature>
<feature type="binding site" evidence="2">
    <location>
        <position position="79"/>
    </location>
    <ligand>
        <name>a 1,2-diacyl-sn-glycero-3-phospho-(1D-myo-inositol-4,5-bisphosphate)</name>
        <dbReference type="ChEBI" id="CHEBI:58456"/>
        <note>agonist</note>
    </ligand>
</feature>
<feature type="binding site" evidence="2">
    <location>
        <position position="81"/>
    </location>
    <ligand>
        <name>a 1,2-diacyl-sn-glycero-3-phospho-(1D-myo-inositol-4,5-bisphosphate)</name>
        <dbReference type="ChEBI" id="CHEBI:58456"/>
        <note>agonist</note>
    </ligand>
</feature>
<feature type="binding site" evidence="2">
    <location>
        <position position="143"/>
    </location>
    <ligand>
        <name>K(+)</name>
        <dbReference type="ChEBI" id="CHEBI:29103"/>
        <label>1</label>
        <note>ligand likely shared between the subunits of the homotetramer</note>
    </ligand>
</feature>
<feature type="binding site" evidence="2">
    <location>
        <position position="143"/>
    </location>
    <ligand>
        <name>K(+)</name>
        <dbReference type="ChEBI" id="CHEBI:29103"/>
        <label>2</label>
        <note>ligand likely shared between the subunits of the homotetramer</note>
    </ligand>
</feature>
<feature type="binding site" evidence="2">
    <location>
        <position position="144"/>
    </location>
    <ligand>
        <name>K(+)</name>
        <dbReference type="ChEBI" id="CHEBI:29103"/>
        <label>2</label>
        <note>ligand likely shared between the subunits of the homotetramer</note>
    </ligand>
</feature>
<feature type="binding site" evidence="2">
    <location>
        <position position="144"/>
    </location>
    <ligand>
        <name>K(+)</name>
        <dbReference type="ChEBI" id="CHEBI:29103"/>
        <label>3</label>
        <note>ligand likely shared between the subunits of the homotetramer</note>
    </ligand>
</feature>
<feature type="binding site" evidence="2">
    <location>
        <position position="145"/>
    </location>
    <ligand>
        <name>K(+)</name>
        <dbReference type="ChEBI" id="CHEBI:29103"/>
        <label>3</label>
        <note>ligand likely shared between the subunits of the homotetramer</note>
    </ligand>
</feature>
<feature type="binding site" evidence="2">
    <location>
        <position position="145"/>
    </location>
    <ligand>
        <name>K(+)</name>
        <dbReference type="ChEBI" id="CHEBI:29103"/>
        <label>4</label>
        <note>ligand likely shared between the subunits of the homotetramer</note>
    </ligand>
</feature>
<feature type="binding site" evidence="2">
    <location>
        <position position="146"/>
    </location>
    <ligand>
        <name>K(+)</name>
        <dbReference type="ChEBI" id="CHEBI:29103"/>
        <label>4</label>
        <note>ligand likely shared between the subunits of the homotetramer</note>
    </ligand>
</feature>
<feature type="binding site" evidence="2">
    <location>
        <position position="183"/>
    </location>
    <ligand>
        <name>a 1,2-diacyl-sn-glycero-3-phospho-(1D-myo-inositol-4,5-bisphosphate)</name>
        <dbReference type="ChEBI" id="CHEBI:58456"/>
        <note>agonist</note>
    </ligand>
</feature>
<feature type="binding site" evidence="2">
    <location>
        <position position="188"/>
    </location>
    <ligand>
        <name>a 1,2-diacyl-sn-glycero-3-phospho-(1D-myo-inositol-4,5-bisphosphate)</name>
        <dbReference type="ChEBI" id="CHEBI:58456"/>
        <note>agonist</note>
    </ligand>
</feature>
<feature type="site" description="Role in the control of polyamine-mediated channel gating and in the blocking by intracellular magnesium" evidence="1">
    <location>
        <position position="173"/>
    </location>
</feature>
<feature type="modified residue" description="S-nitrosocysteine" evidence="4">
    <location>
        <position position="75"/>
    </location>
</feature>
<feature type="disulfide bond" evidence="2">
    <location>
        <begin position="123"/>
        <end position="155"/>
    </location>
</feature>
<feature type="sequence conflict" description="In Ref. 1; CAA56622." evidence="9" ref="1">
    <original>I</original>
    <variation>N</variation>
    <location>
        <position position="177"/>
    </location>
</feature>
<feature type="sequence conflict" description="In Ref. 5; BAA88471." evidence="9" ref="5">
    <original>F</original>
    <variation>L</variation>
    <location>
        <position position="255"/>
    </location>
</feature>
<feature type="sequence conflict" description="In Ref. 1; CAA56622." evidence="9" ref="1">
    <original>S</original>
    <variation>I</variation>
    <location>
        <position position="385"/>
    </location>
</feature>
<feature type="sequence conflict" description="In Ref. 1; CAA56622." evidence="9" ref="1">
    <original>A</original>
    <variation>S</variation>
    <location>
        <position position="393"/>
    </location>
</feature>
<feature type="sequence conflict" description="In Ref. 1; CAA56622." evidence="9" ref="1">
    <original>GRS</original>
    <variation>VRT</variation>
    <location>
        <begin position="398"/>
        <end position="400"/>
    </location>
</feature>
<feature type="sequence conflict" description="In Ref. 1; CAA56622." evidence="9" ref="1">
    <original>E</original>
    <variation>V</variation>
    <location>
        <position position="418"/>
    </location>
</feature>
<protein>
    <recommendedName>
        <fullName>ATP-sensitive inward rectifier potassium channel 12</fullName>
    </recommendedName>
    <alternativeName>
        <fullName>Inward rectifier K(+) channel Kir2.2</fullName>
        <shortName>IRK-2</shortName>
    </alternativeName>
    <alternativeName>
        <fullName>Potassium channel, inwardly rectifying subfamily J member 12</fullName>
    </alternativeName>
</protein>
<reference key="1">
    <citation type="journal article" date="1994" name="J. Biol. Chem.">
        <title>Molecular cloning and functional expression of cDNA encoding a second class of inward rectifier potassium channels in the mouse brain.</title>
        <authorList>
            <person name="Takahashi N."/>
            <person name="Morishige K."/>
            <person name="Jahangir A."/>
            <person name="Yamada M."/>
            <person name="Findlay I."/>
            <person name="Koyama H."/>
            <person name="Kurachi Y."/>
        </authorList>
    </citation>
    <scope>NUCLEOTIDE SEQUENCE [MRNA]</scope>
    <scope>FUNCTION</scope>
    <scope>TRANSPORTER ACTIVITY</scope>
    <scope>ACTIVITY REGULATION</scope>
    <scope>TISSUE SPECIFICITY</scope>
    <source>
        <strain>BALB/cJ</strain>
        <tissue>Brain</tissue>
    </source>
</reference>
<reference key="2">
    <citation type="journal article" date="2005" name="Science">
        <title>The transcriptional landscape of the mammalian genome.</title>
        <authorList>
            <person name="Carninci P."/>
            <person name="Kasukawa T."/>
            <person name="Katayama S."/>
            <person name="Gough J."/>
            <person name="Frith M.C."/>
            <person name="Maeda N."/>
            <person name="Oyama R."/>
            <person name="Ravasi T."/>
            <person name="Lenhard B."/>
            <person name="Wells C."/>
            <person name="Kodzius R."/>
            <person name="Shimokawa K."/>
            <person name="Bajic V.B."/>
            <person name="Brenner S.E."/>
            <person name="Batalov S."/>
            <person name="Forrest A.R."/>
            <person name="Zavolan M."/>
            <person name="Davis M.J."/>
            <person name="Wilming L.G."/>
            <person name="Aidinis V."/>
            <person name="Allen J.E."/>
            <person name="Ambesi-Impiombato A."/>
            <person name="Apweiler R."/>
            <person name="Aturaliya R.N."/>
            <person name="Bailey T.L."/>
            <person name="Bansal M."/>
            <person name="Baxter L."/>
            <person name="Beisel K.W."/>
            <person name="Bersano T."/>
            <person name="Bono H."/>
            <person name="Chalk A.M."/>
            <person name="Chiu K.P."/>
            <person name="Choudhary V."/>
            <person name="Christoffels A."/>
            <person name="Clutterbuck D.R."/>
            <person name="Crowe M.L."/>
            <person name="Dalla E."/>
            <person name="Dalrymple B.P."/>
            <person name="de Bono B."/>
            <person name="Della Gatta G."/>
            <person name="di Bernardo D."/>
            <person name="Down T."/>
            <person name="Engstrom P."/>
            <person name="Fagiolini M."/>
            <person name="Faulkner G."/>
            <person name="Fletcher C.F."/>
            <person name="Fukushima T."/>
            <person name="Furuno M."/>
            <person name="Futaki S."/>
            <person name="Gariboldi M."/>
            <person name="Georgii-Hemming P."/>
            <person name="Gingeras T.R."/>
            <person name="Gojobori T."/>
            <person name="Green R.E."/>
            <person name="Gustincich S."/>
            <person name="Harbers M."/>
            <person name="Hayashi Y."/>
            <person name="Hensch T.K."/>
            <person name="Hirokawa N."/>
            <person name="Hill D."/>
            <person name="Huminiecki L."/>
            <person name="Iacono M."/>
            <person name="Ikeo K."/>
            <person name="Iwama A."/>
            <person name="Ishikawa T."/>
            <person name="Jakt M."/>
            <person name="Kanapin A."/>
            <person name="Katoh M."/>
            <person name="Kawasawa Y."/>
            <person name="Kelso J."/>
            <person name="Kitamura H."/>
            <person name="Kitano H."/>
            <person name="Kollias G."/>
            <person name="Krishnan S.P."/>
            <person name="Kruger A."/>
            <person name="Kummerfeld S.K."/>
            <person name="Kurochkin I.V."/>
            <person name="Lareau L.F."/>
            <person name="Lazarevic D."/>
            <person name="Lipovich L."/>
            <person name="Liu J."/>
            <person name="Liuni S."/>
            <person name="McWilliam S."/>
            <person name="Madan Babu M."/>
            <person name="Madera M."/>
            <person name="Marchionni L."/>
            <person name="Matsuda H."/>
            <person name="Matsuzawa S."/>
            <person name="Miki H."/>
            <person name="Mignone F."/>
            <person name="Miyake S."/>
            <person name="Morris K."/>
            <person name="Mottagui-Tabar S."/>
            <person name="Mulder N."/>
            <person name="Nakano N."/>
            <person name="Nakauchi H."/>
            <person name="Ng P."/>
            <person name="Nilsson R."/>
            <person name="Nishiguchi S."/>
            <person name="Nishikawa S."/>
            <person name="Nori F."/>
            <person name="Ohara O."/>
            <person name="Okazaki Y."/>
            <person name="Orlando V."/>
            <person name="Pang K.C."/>
            <person name="Pavan W.J."/>
            <person name="Pavesi G."/>
            <person name="Pesole G."/>
            <person name="Petrovsky N."/>
            <person name="Piazza S."/>
            <person name="Reed J."/>
            <person name="Reid J.F."/>
            <person name="Ring B.Z."/>
            <person name="Ringwald M."/>
            <person name="Rost B."/>
            <person name="Ruan Y."/>
            <person name="Salzberg S.L."/>
            <person name="Sandelin A."/>
            <person name="Schneider C."/>
            <person name="Schoenbach C."/>
            <person name="Sekiguchi K."/>
            <person name="Semple C.A."/>
            <person name="Seno S."/>
            <person name="Sessa L."/>
            <person name="Sheng Y."/>
            <person name="Shibata Y."/>
            <person name="Shimada H."/>
            <person name="Shimada K."/>
            <person name="Silva D."/>
            <person name="Sinclair B."/>
            <person name="Sperling S."/>
            <person name="Stupka E."/>
            <person name="Sugiura K."/>
            <person name="Sultana R."/>
            <person name="Takenaka Y."/>
            <person name="Taki K."/>
            <person name="Tammoja K."/>
            <person name="Tan S.L."/>
            <person name="Tang S."/>
            <person name="Taylor M.S."/>
            <person name="Tegner J."/>
            <person name="Teichmann S.A."/>
            <person name="Ueda H.R."/>
            <person name="van Nimwegen E."/>
            <person name="Verardo R."/>
            <person name="Wei C.L."/>
            <person name="Yagi K."/>
            <person name="Yamanishi H."/>
            <person name="Zabarovsky E."/>
            <person name="Zhu S."/>
            <person name="Zimmer A."/>
            <person name="Hide W."/>
            <person name="Bult C."/>
            <person name="Grimmond S.M."/>
            <person name="Teasdale R.D."/>
            <person name="Liu E.T."/>
            <person name="Brusic V."/>
            <person name="Quackenbush J."/>
            <person name="Wahlestedt C."/>
            <person name="Mattick J.S."/>
            <person name="Hume D.A."/>
            <person name="Kai C."/>
            <person name="Sasaki D."/>
            <person name="Tomaru Y."/>
            <person name="Fukuda S."/>
            <person name="Kanamori-Katayama M."/>
            <person name="Suzuki M."/>
            <person name="Aoki J."/>
            <person name="Arakawa T."/>
            <person name="Iida J."/>
            <person name="Imamura K."/>
            <person name="Itoh M."/>
            <person name="Kato T."/>
            <person name="Kawaji H."/>
            <person name="Kawagashira N."/>
            <person name="Kawashima T."/>
            <person name="Kojima M."/>
            <person name="Kondo S."/>
            <person name="Konno H."/>
            <person name="Nakano K."/>
            <person name="Ninomiya N."/>
            <person name="Nishio T."/>
            <person name="Okada M."/>
            <person name="Plessy C."/>
            <person name="Shibata K."/>
            <person name="Shiraki T."/>
            <person name="Suzuki S."/>
            <person name="Tagami M."/>
            <person name="Waki K."/>
            <person name="Watahiki A."/>
            <person name="Okamura-Oho Y."/>
            <person name="Suzuki H."/>
            <person name="Kawai J."/>
            <person name="Hayashizaki Y."/>
        </authorList>
    </citation>
    <scope>NUCLEOTIDE SEQUENCE [LARGE SCALE MRNA]</scope>
    <source>
        <strain>C57BL/6J</strain>
        <tissue>Olfactory bulb</tissue>
    </source>
</reference>
<reference key="3">
    <citation type="journal article" date="2009" name="PLoS Biol.">
        <title>Lineage-specific biology revealed by a finished genome assembly of the mouse.</title>
        <authorList>
            <person name="Church D.M."/>
            <person name="Goodstadt L."/>
            <person name="Hillier L.W."/>
            <person name="Zody M.C."/>
            <person name="Goldstein S."/>
            <person name="She X."/>
            <person name="Bult C.J."/>
            <person name="Agarwala R."/>
            <person name="Cherry J.L."/>
            <person name="DiCuccio M."/>
            <person name="Hlavina W."/>
            <person name="Kapustin Y."/>
            <person name="Meric P."/>
            <person name="Maglott D."/>
            <person name="Birtle Z."/>
            <person name="Marques A.C."/>
            <person name="Graves T."/>
            <person name="Zhou S."/>
            <person name="Teague B."/>
            <person name="Potamousis K."/>
            <person name="Churas C."/>
            <person name="Place M."/>
            <person name="Herschleb J."/>
            <person name="Runnheim R."/>
            <person name="Forrest D."/>
            <person name="Amos-Landgraf J."/>
            <person name="Schwartz D.C."/>
            <person name="Cheng Z."/>
            <person name="Lindblad-Toh K."/>
            <person name="Eichler E.E."/>
            <person name="Ponting C.P."/>
        </authorList>
    </citation>
    <scope>NUCLEOTIDE SEQUENCE [LARGE SCALE GENOMIC DNA]</scope>
    <source>
        <strain>C57BL/6J</strain>
    </source>
</reference>
<reference key="4">
    <citation type="journal article" date="2004" name="Genome Res.">
        <title>The status, quality, and expansion of the NIH full-length cDNA project: the Mammalian Gene Collection (MGC).</title>
        <authorList>
            <consortium name="The MGC Project Team"/>
        </authorList>
    </citation>
    <scope>NUCLEOTIDE SEQUENCE [LARGE SCALE MRNA]</scope>
</reference>
<reference key="5">
    <citation type="submission" date="1999-12" db="EMBL/GenBank/DDBJ databases">
        <title>Inward recifier potassium channel IRK2.</title>
        <authorList>
            <person name="Ikeda K."/>
            <person name="Kobayashi T."/>
        </authorList>
    </citation>
    <scope>NUCLEOTIDE SEQUENCE [MRNA] OF 10-420</scope>
    <source>
        <strain>C57BL/6NJcl</strain>
        <tissue>Brain</tissue>
    </source>
</reference>
<gene>
    <name type="primary">Kcnj12</name>
    <name type="synonym">Irk2</name>
</gene>